<evidence type="ECO:0000256" key="1">
    <source>
        <dbReference type="SAM" id="MobiDB-lite"/>
    </source>
</evidence>
<evidence type="ECO:0000305" key="2"/>
<protein>
    <recommendedName>
        <fullName>Sperm protamine P1</fullName>
    </recommendedName>
</protein>
<accession>Q9GLQ0</accession>
<reference key="1">
    <citation type="journal article" date="2000" name="J. Mammal. Evol.">
        <title>Intergeneric relationships among Macropodoidea (Metatheria: Diprotodontia) and the chronicle of kangaroo evolution.</title>
        <authorList>
            <person name="Burk A."/>
            <person name="Springer M.S."/>
        </authorList>
    </citation>
    <scope>NUCLEOTIDE SEQUENCE [GENOMIC DNA]</scope>
</reference>
<proteinExistence type="evidence at transcript level"/>
<name>HSP1_BETPE</name>
<organism>
    <name type="scientific">Bettongia penicillata</name>
    <name type="common">Brush-tailed bettong</name>
    <dbReference type="NCBI Taxonomy" id="69259"/>
    <lineage>
        <taxon>Eukaryota</taxon>
        <taxon>Metazoa</taxon>
        <taxon>Chordata</taxon>
        <taxon>Craniata</taxon>
        <taxon>Vertebrata</taxon>
        <taxon>Euteleostomi</taxon>
        <taxon>Mammalia</taxon>
        <taxon>Metatheria</taxon>
        <taxon>Diprotodontia</taxon>
        <taxon>Potoroidae</taxon>
        <taxon>Bettongia</taxon>
    </lineage>
</organism>
<feature type="chain" id="PRO_0000191450" description="Sperm protamine P1">
    <location>
        <begin position="1"/>
        <end position="62"/>
    </location>
</feature>
<feature type="region of interest" description="Disordered" evidence="1">
    <location>
        <begin position="1"/>
        <end position="62"/>
    </location>
</feature>
<sequence length="62" mass="8633">MARYRHSRSRSRSRYRRRRRRRSRYRSRRRRYRGSRRRRSRRRGRRRGYSRRRYSRRRRRRY</sequence>
<gene>
    <name type="primary">PRM1</name>
</gene>
<dbReference type="EMBL" id="AF187546">
    <property type="protein sequence ID" value="AAG27963.1"/>
    <property type="molecule type" value="Genomic_DNA"/>
</dbReference>
<dbReference type="GO" id="GO:0000786">
    <property type="term" value="C:nucleosome"/>
    <property type="evidence" value="ECO:0007669"/>
    <property type="project" value="UniProtKB-KW"/>
</dbReference>
<dbReference type="GO" id="GO:0005634">
    <property type="term" value="C:nucleus"/>
    <property type="evidence" value="ECO:0007669"/>
    <property type="project" value="UniProtKB-SubCell"/>
</dbReference>
<dbReference type="GO" id="GO:0003677">
    <property type="term" value="F:DNA binding"/>
    <property type="evidence" value="ECO:0007669"/>
    <property type="project" value="UniProtKB-KW"/>
</dbReference>
<dbReference type="GO" id="GO:0030261">
    <property type="term" value="P:chromosome condensation"/>
    <property type="evidence" value="ECO:0007669"/>
    <property type="project" value="UniProtKB-KW"/>
</dbReference>
<dbReference type="GO" id="GO:0035092">
    <property type="term" value="P:sperm DNA condensation"/>
    <property type="evidence" value="ECO:0007669"/>
    <property type="project" value="InterPro"/>
</dbReference>
<dbReference type="InterPro" id="IPR000221">
    <property type="entry name" value="Protamine_P1"/>
</dbReference>
<dbReference type="PROSITE" id="PS00048">
    <property type="entry name" value="PROTAMINE_P1"/>
    <property type="match status" value="1"/>
</dbReference>
<comment type="function">
    <text>Protamines substitute for histones in the chromatin of sperm during the haploid phase of spermatogenesis. They compact sperm DNA into a highly condensed, stable and inactive complex.</text>
</comment>
<comment type="subcellular location">
    <subcellularLocation>
        <location>Nucleus</location>
    </subcellularLocation>
    <subcellularLocation>
        <location>Chromosome</location>
    </subcellularLocation>
</comment>
<comment type="tissue specificity">
    <text>Testis.</text>
</comment>
<comment type="similarity">
    <text evidence="2">Belongs to the protamine P1 family.</text>
</comment>
<keyword id="KW-0158">Chromosome</keyword>
<keyword id="KW-0217">Developmental protein</keyword>
<keyword id="KW-0221">Differentiation</keyword>
<keyword id="KW-0226">DNA condensation</keyword>
<keyword id="KW-0238">DNA-binding</keyword>
<keyword id="KW-0544">Nucleosome core</keyword>
<keyword id="KW-0539">Nucleus</keyword>
<keyword id="KW-0744">Spermatogenesis</keyword>